<keyword id="KW-0030">Aminoacyl-tRNA synthetase</keyword>
<keyword id="KW-0067">ATP-binding</keyword>
<keyword id="KW-0963">Cytoplasm</keyword>
<keyword id="KW-0436">Ligase</keyword>
<keyword id="KW-0547">Nucleotide-binding</keyword>
<keyword id="KW-0648">Protein biosynthesis</keyword>
<protein>
    <recommendedName>
        <fullName evidence="1">Proline--tRNA ligase</fullName>
        <ecNumber evidence="1">6.1.1.15</ecNumber>
    </recommendedName>
    <alternativeName>
        <fullName evidence="1">Prolyl-tRNA synthetase</fullName>
        <shortName evidence="1">ProRS</shortName>
    </alternativeName>
</protein>
<gene>
    <name evidence="1" type="primary">proS</name>
    <name type="ordered locus">APP7_1916</name>
</gene>
<feature type="chain" id="PRO_1000199347" description="Proline--tRNA ligase">
    <location>
        <begin position="1"/>
        <end position="571"/>
    </location>
</feature>
<reference key="1">
    <citation type="submission" date="2008-06" db="EMBL/GenBank/DDBJ databases">
        <title>Genome and proteome analysis of A. pleuropneumoniae serotype 7.</title>
        <authorList>
            <person name="Linke B."/>
            <person name="Buettner F."/>
            <person name="Martinez-Arias R."/>
            <person name="Goesmann A."/>
            <person name="Baltes N."/>
            <person name="Tegetmeyer H."/>
            <person name="Singh M."/>
            <person name="Gerlach G.F."/>
        </authorList>
    </citation>
    <scope>NUCLEOTIDE SEQUENCE [LARGE SCALE GENOMIC DNA]</scope>
    <source>
        <strain>AP76</strain>
    </source>
</reference>
<sequence length="571" mass="63574">MRTSQYLFSTLKETPNDAQVVSHQLMLRAGMIRPMASGLYNWLPTGIKVLKKVENIIREEMNKGGAIEVLMPVVQPAELWQESGRWNDYGAELLRFVDRGSRDFVLGPTHEEVITDLVRREVSSYKQLPLNLYQIQTKFRDEVRPRFGVMRSREFVMKDAYSFHVDKASLQETYDVMYQVYSNIFTRLGLDFRAVQADTGSIGGSASHEFQVLASSGEDDVVFSTESDFAANIELAEAVAVGERQAPTAEMQLVDTPNAKTINELVEQFNLPIEKTVKTLIVKGATEEQSLVALVLRGDHELNEIKAQKHPLVADPLEFADEAEIKAKIGAGVGSLGVINLNVPAIIDRSVAVMSDFGCGANIDGRHYFNVNWERDVAMPEVADLRNVVEGDPSPDGKGVLQIKRGIEVGHIFQLGTKYSEAMKATVQGDDGKPLVMTMGCYGIGVTRVVAAAIEQHHDERGIIWPSDEIAPFTVAIVPMNMHKSESVQQFSEELYRTLKAQGVDVIFDDRKERPGVMFADMELIGVPHMVVIGEKNLANGEIEYKNRRTGEKQMIAKDQLLAFLKENVKA</sequence>
<organism>
    <name type="scientific">Actinobacillus pleuropneumoniae serotype 7 (strain AP76)</name>
    <dbReference type="NCBI Taxonomy" id="537457"/>
    <lineage>
        <taxon>Bacteria</taxon>
        <taxon>Pseudomonadati</taxon>
        <taxon>Pseudomonadota</taxon>
        <taxon>Gammaproteobacteria</taxon>
        <taxon>Pasteurellales</taxon>
        <taxon>Pasteurellaceae</taxon>
        <taxon>Actinobacillus</taxon>
    </lineage>
</organism>
<dbReference type="EC" id="6.1.1.15" evidence="1"/>
<dbReference type="EMBL" id="CP001091">
    <property type="protein sequence ID" value="ACE62568.1"/>
    <property type="molecule type" value="Genomic_DNA"/>
</dbReference>
<dbReference type="RefSeq" id="WP_005618303.1">
    <property type="nucleotide sequence ID" value="NC_010939.1"/>
</dbReference>
<dbReference type="SMR" id="B3GZ82"/>
<dbReference type="KEGG" id="apa:APP7_1916"/>
<dbReference type="HOGENOM" id="CLU_016739_0_0_6"/>
<dbReference type="Proteomes" id="UP000001226">
    <property type="component" value="Chromosome"/>
</dbReference>
<dbReference type="GO" id="GO:0005829">
    <property type="term" value="C:cytosol"/>
    <property type="evidence" value="ECO:0007669"/>
    <property type="project" value="TreeGrafter"/>
</dbReference>
<dbReference type="GO" id="GO:0002161">
    <property type="term" value="F:aminoacyl-tRNA deacylase activity"/>
    <property type="evidence" value="ECO:0007669"/>
    <property type="project" value="InterPro"/>
</dbReference>
<dbReference type="GO" id="GO:0005524">
    <property type="term" value="F:ATP binding"/>
    <property type="evidence" value="ECO:0007669"/>
    <property type="project" value="UniProtKB-UniRule"/>
</dbReference>
<dbReference type="GO" id="GO:0004827">
    <property type="term" value="F:proline-tRNA ligase activity"/>
    <property type="evidence" value="ECO:0007669"/>
    <property type="project" value="UniProtKB-UniRule"/>
</dbReference>
<dbReference type="GO" id="GO:0006433">
    <property type="term" value="P:prolyl-tRNA aminoacylation"/>
    <property type="evidence" value="ECO:0007669"/>
    <property type="project" value="UniProtKB-UniRule"/>
</dbReference>
<dbReference type="CDD" id="cd04334">
    <property type="entry name" value="ProRS-INS"/>
    <property type="match status" value="1"/>
</dbReference>
<dbReference type="CDD" id="cd00861">
    <property type="entry name" value="ProRS_anticodon_short"/>
    <property type="match status" value="1"/>
</dbReference>
<dbReference type="CDD" id="cd00779">
    <property type="entry name" value="ProRS_core_prok"/>
    <property type="match status" value="1"/>
</dbReference>
<dbReference type="FunFam" id="3.30.930.10:FF:000043">
    <property type="entry name" value="Proline--tRNA ligase"/>
    <property type="match status" value="1"/>
</dbReference>
<dbReference type="FunFam" id="3.30.930.10:FF:000097">
    <property type="entry name" value="Proline--tRNA ligase"/>
    <property type="match status" value="1"/>
</dbReference>
<dbReference type="FunFam" id="3.40.50.800:FF:000006">
    <property type="entry name" value="Proline--tRNA ligase"/>
    <property type="match status" value="1"/>
</dbReference>
<dbReference type="Gene3D" id="3.40.50.800">
    <property type="entry name" value="Anticodon-binding domain"/>
    <property type="match status" value="1"/>
</dbReference>
<dbReference type="Gene3D" id="3.30.930.10">
    <property type="entry name" value="Bira Bifunctional Protein, Domain 2"/>
    <property type="match status" value="2"/>
</dbReference>
<dbReference type="HAMAP" id="MF_01569">
    <property type="entry name" value="Pro_tRNA_synth_type1"/>
    <property type="match status" value="1"/>
</dbReference>
<dbReference type="InterPro" id="IPR002314">
    <property type="entry name" value="aa-tRNA-synt_IIb"/>
</dbReference>
<dbReference type="InterPro" id="IPR006195">
    <property type="entry name" value="aa-tRNA-synth_II"/>
</dbReference>
<dbReference type="InterPro" id="IPR045864">
    <property type="entry name" value="aa-tRNA-synth_II/BPL/LPL"/>
</dbReference>
<dbReference type="InterPro" id="IPR004154">
    <property type="entry name" value="Anticodon-bd"/>
</dbReference>
<dbReference type="InterPro" id="IPR036621">
    <property type="entry name" value="Anticodon-bd_dom_sf"/>
</dbReference>
<dbReference type="InterPro" id="IPR002316">
    <property type="entry name" value="Pro-tRNA-ligase_IIa"/>
</dbReference>
<dbReference type="InterPro" id="IPR004500">
    <property type="entry name" value="Pro-tRNA-synth_IIa_bac-type"/>
</dbReference>
<dbReference type="InterPro" id="IPR023717">
    <property type="entry name" value="Pro-tRNA-Synthase_IIa_type1"/>
</dbReference>
<dbReference type="InterPro" id="IPR050062">
    <property type="entry name" value="Pro-tRNA_synthetase"/>
</dbReference>
<dbReference type="InterPro" id="IPR044140">
    <property type="entry name" value="ProRS_anticodon_short"/>
</dbReference>
<dbReference type="InterPro" id="IPR033730">
    <property type="entry name" value="ProRS_core_prok"/>
</dbReference>
<dbReference type="InterPro" id="IPR036754">
    <property type="entry name" value="YbaK/aa-tRNA-synt-asso_dom_sf"/>
</dbReference>
<dbReference type="InterPro" id="IPR007214">
    <property type="entry name" value="YbaK/aa-tRNA-synth-assoc-dom"/>
</dbReference>
<dbReference type="NCBIfam" id="NF006625">
    <property type="entry name" value="PRK09194.1"/>
    <property type="match status" value="1"/>
</dbReference>
<dbReference type="NCBIfam" id="TIGR00409">
    <property type="entry name" value="proS_fam_II"/>
    <property type="match status" value="1"/>
</dbReference>
<dbReference type="PANTHER" id="PTHR42753">
    <property type="entry name" value="MITOCHONDRIAL RIBOSOME PROTEIN L39/PROLYL-TRNA LIGASE FAMILY MEMBER"/>
    <property type="match status" value="1"/>
</dbReference>
<dbReference type="PANTHER" id="PTHR42753:SF2">
    <property type="entry name" value="PROLINE--TRNA LIGASE"/>
    <property type="match status" value="1"/>
</dbReference>
<dbReference type="Pfam" id="PF03129">
    <property type="entry name" value="HGTP_anticodon"/>
    <property type="match status" value="1"/>
</dbReference>
<dbReference type="Pfam" id="PF00587">
    <property type="entry name" value="tRNA-synt_2b"/>
    <property type="match status" value="1"/>
</dbReference>
<dbReference type="Pfam" id="PF04073">
    <property type="entry name" value="tRNA_edit"/>
    <property type="match status" value="1"/>
</dbReference>
<dbReference type="PIRSF" id="PIRSF001535">
    <property type="entry name" value="ProRS_1"/>
    <property type="match status" value="1"/>
</dbReference>
<dbReference type="PRINTS" id="PR01046">
    <property type="entry name" value="TRNASYNTHPRO"/>
</dbReference>
<dbReference type="SUPFAM" id="SSF52954">
    <property type="entry name" value="Class II aaRS ABD-related"/>
    <property type="match status" value="1"/>
</dbReference>
<dbReference type="SUPFAM" id="SSF55681">
    <property type="entry name" value="Class II aaRS and biotin synthetases"/>
    <property type="match status" value="1"/>
</dbReference>
<dbReference type="SUPFAM" id="SSF55826">
    <property type="entry name" value="YbaK/ProRS associated domain"/>
    <property type="match status" value="1"/>
</dbReference>
<dbReference type="PROSITE" id="PS50862">
    <property type="entry name" value="AA_TRNA_LIGASE_II"/>
    <property type="match status" value="1"/>
</dbReference>
<comment type="function">
    <text evidence="1">Catalyzes the attachment of proline to tRNA(Pro) in a two-step reaction: proline is first activated by ATP to form Pro-AMP and then transferred to the acceptor end of tRNA(Pro). As ProRS can inadvertently accommodate and process non-cognate amino acids such as alanine and cysteine, to avoid such errors it has two additional distinct editing activities against alanine. One activity is designated as 'pretransfer' editing and involves the tRNA(Pro)-independent hydrolysis of activated Ala-AMP. The other activity is designated 'posttransfer' editing and involves deacylation of mischarged Ala-tRNA(Pro). The misacylated Cys-tRNA(Pro) is not edited by ProRS.</text>
</comment>
<comment type="catalytic activity">
    <reaction evidence="1">
        <text>tRNA(Pro) + L-proline + ATP = L-prolyl-tRNA(Pro) + AMP + diphosphate</text>
        <dbReference type="Rhea" id="RHEA:14305"/>
        <dbReference type="Rhea" id="RHEA-COMP:9700"/>
        <dbReference type="Rhea" id="RHEA-COMP:9702"/>
        <dbReference type="ChEBI" id="CHEBI:30616"/>
        <dbReference type="ChEBI" id="CHEBI:33019"/>
        <dbReference type="ChEBI" id="CHEBI:60039"/>
        <dbReference type="ChEBI" id="CHEBI:78442"/>
        <dbReference type="ChEBI" id="CHEBI:78532"/>
        <dbReference type="ChEBI" id="CHEBI:456215"/>
        <dbReference type="EC" id="6.1.1.15"/>
    </reaction>
</comment>
<comment type="subunit">
    <text evidence="1">Homodimer.</text>
</comment>
<comment type="subcellular location">
    <subcellularLocation>
        <location evidence="1">Cytoplasm</location>
    </subcellularLocation>
</comment>
<comment type="domain">
    <text evidence="1">Consists of three domains: the N-terminal catalytic domain, the editing domain and the C-terminal anticodon-binding domain.</text>
</comment>
<comment type="similarity">
    <text evidence="1">Belongs to the class-II aminoacyl-tRNA synthetase family. ProS type 1 subfamily.</text>
</comment>
<proteinExistence type="inferred from homology"/>
<evidence type="ECO:0000255" key="1">
    <source>
        <dbReference type="HAMAP-Rule" id="MF_01569"/>
    </source>
</evidence>
<name>SYP_ACTP7</name>
<accession>B3GZ82</accession>